<proteinExistence type="inferred from homology"/>
<dbReference type="EMBL" id="CU928145">
    <property type="protein sequence ID" value="CAU95937.1"/>
    <property type="molecule type" value="Genomic_DNA"/>
</dbReference>
<dbReference type="RefSeq" id="WP_000610901.1">
    <property type="nucleotide sequence ID" value="NZ_CP028304.1"/>
</dbReference>
<dbReference type="SMR" id="B7L4H3"/>
<dbReference type="GeneID" id="93777385"/>
<dbReference type="KEGG" id="eck:EC55989_0050"/>
<dbReference type="HOGENOM" id="CLU_128074_0_0_6"/>
<dbReference type="Proteomes" id="UP000000746">
    <property type="component" value="Chromosome"/>
</dbReference>
<dbReference type="GO" id="GO:0070987">
    <property type="term" value="P:error-free translesion synthesis"/>
    <property type="evidence" value="ECO:0007669"/>
    <property type="project" value="TreeGrafter"/>
</dbReference>
<dbReference type="Gene3D" id="2.60.40.1470">
    <property type="entry name" value="ApaG domain"/>
    <property type="match status" value="1"/>
</dbReference>
<dbReference type="HAMAP" id="MF_00791">
    <property type="entry name" value="ApaG"/>
    <property type="match status" value="1"/>
</dbReference>
<dbReference type="InterPro" id="IPR007474">
    <property type="entry name" value="ApaG_domain"/>
</dbReference>
<dbReference type="InterPro" id="IPR036767">
    <property type="entry name" value="ApaG_sf"/>
</dbReference>
<dbReference type="InterPro" id="IPR023065">
    <property type="entry name" value="Uncharacterised_ApaG"/>
</dbReference>
<dbReference type="NCBIfam" id="NF003967">
    <property type="entry name" value="PRK05461.1"/>
    <property type="match status" value="1"/>
</dbReference>
<dbReference type="PANTHER" id="PTHR14289">
    <property type="entry name" value="F-BOX ONLY PROTEIN 3"/>
    <property type="match status" value="1"/>
</dbReference>
<dbReference type="PANTHER" id="PTHR14289:SF16">
    <property type="entry name" value="POLYMERASE DELTA-INTERACTING PROTEIN 2"/>
    <property type="match status" value="1"/>
</dbReference>
<dbReference type="Pfam" id="PF04379">
    <property type="entry name" value="DUF525"/>
    <property type="match status" value="1"/>
</dbReference>
<dbReference type="SUPFAM" id="SSF110069">
    <property type="entry name" value="ApaG-like"/>
    <property type="match status" value="1"/>
</dbReference>
<dbReference type="PROSITE" id="PS51087">
    <property type="entry name" value="APAG"/>
    <property type="match status" value="1"/>
</dbReference>
<organism>
    <name type="scientific">Escherichia coli (strain 55989 / EAEC)</name>
    <dbReference type="NCBI Taxonomy" id="585055"/>
    <lineage>
        <taxon>Bacteria</taxon>
        <taxon>Pseudomonadati</taxon>
        <taxon>Pseudomonadota</taxon>
        <taxon>Gammaproteobacteria</taxon>
        <taxon>Enterobacterales</taxon>
        <taxon>Enterobacteriaceae</taxon>
        <taxon>Escherichia</taxon>
    </lineage>
</organism>
<gene>
    <name evidence="1" type="primary">apaG</name>
    <name type="ordered locus">EC55989_0050</name>
</gene>
<accession>B7L4H3</accession>
<keyword id="KW-1185">Reference proteome</keyword>
<reference key="1">
    <citation type="journal article" date="2009" name="PLoS Genet.">
        <title>Organised genome dynamics in the Escherichia coli species results in highly diverse adaptive paths.</title>
        <authorList>
            <person name="Touchon M."/>
            <person name="Hoede C."/>
            <person name="Tenaillon O."/>
            <person name="Barbe V."/>
            <person name="Baeriswyl S."/>
            <person name="Bidet P."/>
            <person name="Bingen E."/>
            <person name="Bonacorsi S."/>
            <person name="Bouchier C."/>
            <person name="Bouvet O."/>
            <person name="Calteau A."/>
            <person name="Chiapello H."/>
            <person name="Clermont O."/>
            <person name="Cruveiller S."/>
            <person name="Danchin A."/>
            <person name="Diard M."/>
            <person name="Dossat C."/>
            <person name="Karoui M.E."/>
            <person name="Frapy E."/>
            <person name="Garry L."/>
            <person name="Ghigo J.M."/>
            <person name="Gilles A.M."/>
            <person name="Johnson J."/>
            <person name="Le Bouguenec C."/>
            <person name="Lescat M."/>
            <person name="Mangenot S."/>
            <person name="Martinez-Jehanne V."/>
            <person name="Matic I."/>
            <person name="Nassif X."/>
            <person name="Oztas S."/>
            <person name="Petit M.A."/>
            <person name="Pichon C."/>
            <person name="Rouy Z."/>
            <person name="Ruf C.S."/>
            <person name="Schneider D."/>
            <person name="Tourret J."/>
            <person name="Vacherie B."/>
            <person name="Vallenet D."/>
            <person name="Medigue C."/>
            <person name="Rocha E.P.C."/>
            <person name="Denamur E."/>
        </authorList>
    </citation>
    <scope>NUCLEOTIDE SEQUENCE [LARGE SCALE GENOMIC DNA]</scope>
    <source>
        <strain>55989 / EAEC</strain>
    </source>
</reference>
<sequence length="125" mass="13867">MINSPRVCIQVQSVYIEAQSSPDNERYVFAYTVTIRNLGRAPVQLLGRYWLITNGNGRETEVQGEGVVGVQPLIAPGEEYQYTSGAIIETPLGTMQGHYEMIDENGVPFSIDIPVFRLAVPTLIH</sequence>
<feature type="chain" id="PRO_1000148497" description="Protein ApaG">
    <location>
        <begin position="1"/>
        <end position="125"/>
    </location>
</feature>
<feature type="domain" description="ApaG" evidence="1">
    <location>
        <begin position="1"/>
        <end position="125"/>
    </location>
</feature>
<protein>
    <recommendedName>
        <fullName evidence="1">Protein ApaG</fullName>
    </recommendedName>
</protein>
<name>APAG_ECO55</name>
<evidence type="ECO:0000255" key="1">
    <source>
        <dbReference type="HAMAP-Rule" id="MF_00791"/>
    </source>
</evidence>